<evidence type="ECO:0000250" key="1"/>
<evidence type="ECO:0000255" key="2"/>
<evidence type="ECO:0000305" key="3"/>
<gene>
    <name type="primary">Coq10b</name>
</gene>
<protein>
    <recommendedName>
        <fullName>Coenzyme Q-binding protein COQ10 homolog B, mitochondrial</fullName>
    </recommendedName>
</protein>
<sequence>MAARTSQRTLARVASGCRPKSTTVTEARVRGSARNVRYLAPCGILMNRTLAPWASVLPKEICARTFFRITTPLVNKRKEYSERRIIGYSMQEMYDVVSGMEDYKHFVPWCKKSDILSRRSGYCKTRLEIGFPPVLERYTSIVTLVKPHLVKASCTDGKLFNHLETVWRFSPGLPGYPRTCTLDFSISFEFRSLLHSQLATLFFDEVVKQMVAAFERRACKLYGPETNIPRELMLHEIHHT</sequence>
<comment type="function">
    <text evidence="1">Required for the function of coenzyme Q in the respiratory chain. May serve as a chaperone or may be involved in the transport of Q6 from its site of synthesis to the catalytic sites of the respiratory complexes (By similarity).</text>
</comment>
<comment type="subunit">
    <text evidence="1">Interacts with coenzyme Q.</text>
</comment>
<comment type="subcellular location">
    <subcellularLocation>
        <location evidence="1">Mitochondrion inner membrane</location>
        <topology evidence="1">Peripheral membrane protein</topology>
        <orientation evidence="1">Matrix side</orientation>
    </subcellularLocation>
</comment>
<comment type="similarity">
    <text evidence="3">Belongs to the COQ10 family.</text>
</comment>
<comment type="sequence caution" evidence="3">
    <conflict type="erroneous initiation">
        <sequence resource="EMBL-CDS" id="AAH88273"/>
    </conflict>
</comment>
<name>CQ10B_RAT</name>
<proteinExistence type="evidence at transcript level"/>
<feature type="transit peptide" description="Mitochondrion" evidence="2">
    <location>
        <begin position="1"/>
        <end position="20"/>
    </location>
</feature>
<feature type="chain" id="PRO_0000228650" description="Coenzyme Q-binding protein COQ10 homolog B, mitochondrial">
    <location>
        <begin position="21"/>
        <end position="240"/>
    </location>
</feature>
<organism>
    <name type="scientific">Rattus norvegicus</name>
    <name type="common">Rat</name>
    <dbReference type="NCBI Taxonomy" id="10116"/>
    <lineage>
        <taxon>Eukaryota</taxon>
        <taxon>Metazoa</taxon>
        <taxon>Chordata</taxon>
        <taxon>Craniata</taxon>
        <taxon>Vertebrata</taxon>
        <taxon>Euteleostomi</taxon>
        <taxon>Mammalia</taxon>
        <taxon>Eutheria</taxon>
        <taxon>Euarchontoglires</taxon>
        <taxon>Glires</taxon>
        <taxon>Rodentia</taxon>
        <taxon>Myomorpha</taxon>
        <taxon>Muroidea</taxon>
        <taxon>Muridae</taxon>
        <taxon>Murinae</taxon>
        <taxon>Rattus</taxon>
    </lineage>
</organism>
<dbReference type="EMBL" id="BC088273">
    <property type="protein sequence ID" value="AAH88273.1"/>
    <property type="status" value="ALT_INIT"/>
    <property type="molecule type" value="mRNA"/>
</dbReference>
<dbReference type="RefSeq" id="NP_001009671.1">
    <property type="nucleotide sequence ID" value="NM_001009671.1"/>
</dbReference>
<dbReference type="SMR" id="Q5I0I9"/>
<dbReference type="FunCoup" id="Q5I0I9">
    <property type="interactions" value="690"/>
</dbReference>
<dbReference type="STRING" id="10116.ENSRNOP00000050509"/>
<dbReference type="PhosphoSitePlus" id="Q5I0I9"/>
<dbReference type="PaxDb" id="10116-ENSRNOP00000050509"/>
<dbReference type="GeneID" id="301416"/>
<dbReference type="KEGG" id="rno:301416"/>
<dbReference type="UCSC" id="RGD:1359509">
    <property type="organism name" value="rat"/>
</dbReference>
<dbReference type="AGR" id="RGD:1359509"/>
<dbReference type="CTD" id="80219"/>
<dbReference type="RGD" id="1359509">
    <property type="gene designation" value="Coq10b"/>
</dbReference>
<dbReference type="eggNOG" id="KOG3177">
    <property type="taxonomic scope" value="Eukaryota"/>
</dbReference>
<dbReference type="InParanoid" id="Q5I0I9"/>
<dbReference type="OrthoDB" id="292693at2759"/>
<dbReference type="PhylomeDB" id="Q5I0I9"/>
<dbReference type="TreeFam" id="TF314447"/>
<dbReference type="Reactome" id="R-RNO-611105">
    <property type="pathway name" value="Respiratory electron transport"/>
</dbReference>
<dbReference type="Reactome" id="R-RNO-9864848">
    <property type="pathway name" value="Complex IV assembly"/>
</dbReference>
<dbReference type="PRO" id="PR:Q5I0I9"/>
<dbReference type="Proteomes" id="UP000002494">
    <property type="component" value="Unplaced"/>
</dbReference>
<dbReference type="GO" id="GO:0005743">
    <property type="term" value="C:mitochondrial inner membrane"/>
    <property type="evidence" value="ECO:0007669"/>
    <property type="project" value="UniProtKB-SubCell"/>
</dbReference>
<dbReference type="GO" id="GO:0005739">
    <property type="term" value="C:mitochondrion"/>
    <property type="evidence" value="ECO:0000318"/>
    <property type="project" value="GO_Central"/>
</dbReference>
<dbReference type="GO" id="GO:0048039">
    <property type="term" value="F:ubiquinone binding"/>
    <property type="evidence" value="ECO:0007669"/>
    <property type="project" value="InterPro"/>
</dbReference>
<dbReference type="GO" id="GO:0045333">
    <property type="term" value="P:cellular respiration"/>
    <property type="evidence" value="ECO:0007669"/>
    <property type="project" value="InterPro"/>
</dbReference>
<dbReference type="CDD" id="cd07813">
    <property type="entry name" value="COQ10p_like"/>
    <property type="match status" value="1"/>
</dbReference>
<dbReference type="FunFam" id="3.30.530.20:FF:000002">
    <property type="entry name" value="Coenzyme Q-binding protein COQ10 homolog, mitochondrial"/>
    <property type="match status" value="1"/>
</dbReference>
<dbReference type="Gene3D" id="3.30.530.20">
    <property type="match status" value="1"/>
</dbReference>
<dbReference type="InterPro" id="IPR044996">
    <property type="entry name" value="COQ10-like"/>
</dbReference>
<dbReference type="InterPro" id="IPR005031">
    <property type="entry name" value="COQ10_START"/>
</dbReference>
<dbReference type="InterPro" id="IPR023393">
    <property type="entry name" value="START-like_dom_sf"/>
</dbReference>
<dbReference type="PANTHER" id="PTHR12901:SF9">
    <property type="entry name" value="COENZYME Q-BINDING PROTEIN COQ10 HOMOLOG B, MITOCHONDRIAL"/>
    <property type="match status" value="1"/>
</dbReference>
<dbReference type="PANTHER" id="PTHR12901">
    <property type="entry name" value="SPERM PROTEIN HOMOLOG"/>
    <property type="match status" value="1"/>
</dbReference>
<dbReference type="Pfam" id="PF03364">
    <property type="entry name" value="Polyketide_cyc"/>
    <property type="match status" value="1"/>
</dbReference>
<dbReference type="SUPFAM" id="SSF55961">
    <property type="entry name" value="Bet v1-like"/>
    <property type="match status" value="1"/>
</dbReference>
<accession>Q5I0I9</accession>
<keyword id="KW-0472">Membrane</keyword>
<keyword id="KW-0496">Mitochondrion</keyword>
<keyword id="KW-0999">Mitochondrion inner membrane</keyword>
<keyword id="KW-1185">Reference proteome</keyword>
<keyword id="KW-0809">Transit peptide</keyword>
<reference key="1">
    <citation type="journal article" date="2004" name="Genome Res.">
        <title>The status, quality, and expansion of the NIH full-length cDNA project: the Mammalian Gene Collection (MGC).</title>
        <authorList>
            <consortium name="The MGC Project Team"/>
        </authorList>
    </citation>
    <scope>NUCLEOTIDE SEQUENCE [LARGE SCALE MRNA]</scope>
    <source>
        <tissue>Thymus</tissue>
    </source>
</reference>